<feature type="chain" id="PRO_1000192781" description="LexA repressor">
    <location>
        <begin position="1"/>
        <end position="209"/>
    </location>
</feature>
<feature type="DNA-binding region" description="H-T-H motif" evidence="1">
    <location>
        <begin position="28"/>
        <end position="48"/>
    </location>
</feature>
<feature type="active site" description="For autocatalytic cleavage activity" evidence="1">
    <location>
        <position position="126"/>
    </location>
</feature>
<feature type="active site" description="For autocatalytic cleavage activity" evidence="1">
    <location>
        <position position="163"/>
    </location>
</feature>
<feature type="site" description="Cleavage; by autolysis" evidence="1">
    <location>
        <begin position="91"/>
        <end position="92"/>
    </location>
</feature>
<sequence>MKPLTPRQQEVFDLIKSKIDETGMPPTRAEIAKELGFRSANAAEEHLKALARKQVIEMVPGASRGIRILVDNAANEEEAETGLPLIGRVAAGEPILAQEHVEAHYQVDPSMFRPQADFLLRVHGESMKNIGILDGDLLAVHKTQDVRNGQVVVARVEDDVTVKRLERKGSKVFLHAENEEFAPIEVDLAAQSLTIEGIAVGVIRNSTWM</sequence>
<evidence type="ECO:0000255" key="1">
    <source>
        <dbReference type="HAMAP-Rule" id="MF_00015"/>
    </source>
</evidence>
<name>LEXA_VIBCM</name>
<comment type="function">
    <text evidence="1">Represses a number of genes involved in the response to DNA damage (SOS response), including recA and lexA. In the presence of single-stranded DNA, RecA interacts with LexA causing an autocatalytic cleavage which disrupts the DNA-binding part of LexA, leading to derepression of the SOS regulon and eventually DNA repair.</text>
</comment>
<comment type="catalytic activity">
    <reaction evidence="1">
        <text>Hydrolysis of Ala-|-Gly bond in repressor LexA.</text>
        <dbReference type="EC" id="3.4.21.88"/>
    </reaction>
</comment>
<comment type="subunit">
    <text evidence="1">Homodimer.</text>
</comment>
<comment type="similarity">
    <text evidence="1">Belongs to the peptidase S24 family.</text>
</comment>
<proteinExistence type="inferred from homology"/>
<reference key="1">
    <citation type="journal article" date="2008" name="PLoS ONE">
        <title>A recalibrated molecular clock and independent origins for the cholera pandemic clones.</title>
        <authorList>
            <person name="Feng L."/>
            <person name="Reeves P.R."/>
            <person name="Lan R."/>
            <person name="Ren Y."/>
            <person name="Gao C."/>
            <person name="Zhou Z."/>
            <person name="Ren Y."/>
            <person name="Cheng J."/>
            <person name="Wang W."/>
            <person name="Wang J."/>
            <person name="Qian W."/>
            <person name="Li D."/>
            <person name="Wang L."/>
        </authorList>
    </citation>
    <scope>NUCLEOTIDE SEQUENCE [LARGE SCALE GENOMIC DNA]</scope>
    <source>
        <strain>M66-2</strain>
    </source>
</reference>
<dbReference type="EC" id="3.4.21.88" evidence="1"/>
<dbReference type="EMBL" id="CP001233">
    <property type="protein sequence ID" value="ACP04428.1"/>
    <property type="molecule type" value="Genomic_DNA"/>
</dbReference>
<dbReference type="RefSeq" id="WP_000803693.1">
    <property type="nucleotide sequence ID" value="NC_012578.1"/>
</dbReference>
<dbReference type="SMR" id="C3LPT4"/>
<dbReference type="MEROPS" id="S24.001"/>
<dbReference type="GeneID" id="69718587"/>
<dbReference type="KEGG" id="vcm:VCM66_0092"/>
<dbReference type="HOGENOM" id="CLU_066192_45_3_6"/>
<dbReference type="Proteomes" id="UP000001217">
    <property type="component" value="Chromosome I"/>
</dbReference>
<dbReference type="GO" id="GO:0003677">
    <property type="term" value="F:DNA binding"/>
    <property type="evidence" value="ECO:0007669"/>
    <property type="project" value="UniProtKB-UniRule"/>
</dbReference>
<dbReference type="GO" id="GO:0004252">
    <property type="term" value="F:serine-type endopeptidase activity"/>
    <property type="evidence" value="ECO:0007669"/>
    <property type="project" value="UniProtKB-UniRule"/>
</dbReference>
<dbReference type="GO" id="GO:0006281">
    <property type="term" value="P:DNA repair"/>
    <property type="evidence" value="ECO:0007669"/>
    <property type="project" value="UniProtKB-UniRule"/>
</dbReference>
<dbReference type="GO" id="GO:0006260">
    <property type="term" value="P:DNA replication"/>
    <property type="evidence" value="ECO:0007669"/>
    <property type="project" value="UniProtKB-UniRule"/>
</dbReference>
<dbReference type="GO" id="GO:0045892">
    <property type="term" value="P:negative regulation of DNA-templated transcription"/>
    <property type="evidence" value="ECO:0007669"/>
    <property type="project" value="UniProtKB-UniRule"/>
</dbReference>
<dbReference type="GO" id="GO:0006508">
    <property type="term" value="P:proteolysis"/>
    <property type="evidence" value="ECO:0007669"/>
    <property type="project" value="InterPro"/>
</dbReference>
<dbReference type="GO" id="GO:0009432">
    <property type="term" value="P:SOS response"/>
    <property type="evidence" value="ECO:0007669"/>
    <property type="project" value="UniProtKB-UniRule"/>
</dbReference>
<dbReference type="CDD" id="cd06529">
    <property type="entry name" value="S24_LexA-like"/>
    <property type="match status" value="1"/>
</dbReference>
<dbReference type="FunFam" id="1.10.10.10:FF:000009">
    <property type="entry name" value="LexA repressor"/>
    <property type="match status" value="1"/>
</dbReference>
<dbReference type="FunFam" id="2.10.109.10:FF:000001">
    <property type="entry name" value="LexA repressor"/>
    <property type="match status" value="1"/>
</dbReference>
<dbReference type="Gene3D" id="2.10.109.10">
    <property type="entry name" value="Umud Fragment, subunit A"/>
    <property type="match status" value="1"/>
</dbReference>
<dbReference type="Gene3D" id="1.10.10.10">
    <property type="entry name" value="Winged helix-like DNA-binding domain superfamily/Winged helix DNA-binding domain"/>
    <property type="match status" value="1"/>
</dbReference>
<dbReference type="HAMAP" id="MF_00015">
    <property type="entry name" value="LexA"/>
    <property type="match status" value="1"/>
</dbReference>
<dbReference type="InterPro" id="IPR006200">
    <property type="entry name" value="LexA"/>
</dbReference>
<dbReference type="InterPro" id="IPR039418">
    <property type="entry name" value="LexA-like"/>
</dbReference>
<dbReference type="InterPro" id="IPR036286">
    <property type="entry name" value="LexA/Signal_pep-like_sf"/>
</dbReference>
<dbReference type="InterPro" id="IPR006199">
    <property type="entry name" value="LexA_DNA-bd_dom"/>
</dbReference>
<dbReference type="InterPro" id="IPR050077">
    <property type="entry name" value="LexA_repressor"/>
</dbReference>
<dbReference type="InterPro" id="IPR006197">
    <property type="entry name" value="Peptidase_S24_LexA"/>
</dbReference>
<dbReference type="InterPro" id="IPR015927">
    <property type="entry name" value="Peptidase_S24_S26A/B/C"/>
</dbReference>
<dbReference type="InterPro" id="IPR036388">
    <property type="entry name" value="WH-like_DNA-bd_sf"/>
</dbReference>
<dbReference type="InterPro" id="IPR036390">
    <property type="entry name" value="WH_DNA-bd_sf"/>
</dbReference>
<dbReference type="NCBIfam" id="TIGR00498">
    <property type="entry name" value="lexA"/>
    <property type="match status" value="1"/>
</dbReference>
<dbReference type="PANTHER" id="PTHR33516">
    <property type="entry name" value="LEXA REPRESSOR"/>
    <property type="match status" value="1"/>
</dbReference>
<dbReference type="PANTHER" id="PTHR33516:SF2">
    <property type="entry name" value="LEXA REPRESSOR-RELATED"/>
    <property type="match status" value="1"/>
</dbReference>
<dbReference type="Pfam" id="PF01726">
    <property type="entry name" value="LexA_DNA_bind"/>
    <property type="match status" value="1"/>
</dbReference>
<dbReference type="Pfam" id="PF00717">
    <property type="entry name" value="Peptidase_S24"/>
    <property type="match status" value="1"/>
</dbReference>
<dbReference type="PRINTS" id="PR00726">
    <property type="entry name" value="LEXASERPTASE"/>
</dbReference>
<dbReference type="SUPFAM" id="SSF51306">
    <property type="entry name" value="LexA/Signal peptidase"/>
    <property type="match status" value="1"/>
</dbReference>
<dbReference type="SUPFAM" id="SSF46785">
    <property type="entry name" value="Winged helix' DNA-binding domain"/>
    <property type="match status" value="1"/>
</dbReference>
<accession>C3LPT4</accession>
<gene>
    <name evidence="1" type="primary">lexA</name>
    <name type="ordered locus">VCM66_0092</name>
</gene>
<organism>
    <name type="scientific">Vibrio cholerae serotype O1 (strain M66-2)</name>
    <dbReference type="NCBI Taxonomy" id="579112"/>
    <lineage>
        <taxon>Bacteria</taxon>
        <taxon>Pseudomonadati</taxon>
        <taxon>Pseudomonadota</taxon>
        <taxon>Gammaproteobacteria</taxon>
        <taxon>Vibrionales</taxon>
        <taxon>Vibrionaceae</taxon>
        <taxon>Vibrio</taxon>
    </lineage>
</organism>
<protein>
    <recommendedName>
        <fullName evidence="1">LexA repressor</fullName>
        <ecNumber evidence="1">3.4.21.88</ecNumber>
    </recommendedName>
</protein>
<keyword id="KW-0068">Autocatalytic cleavage</keyword>
<keyword id="KW-0227">DNA damage</keyword>
<keyword id="KW-0234">DNA repair</keyword>
<keyword id="KW-0235">DNA replication</keyword>
<keyword id="KW-0238">DNA-binding</keyword>
<keyword id="KW-0378">Hydrolase</keyword>
<keyword id="KW-0678">Repressor</keyword>
<keyword id="KW-0742">SOS response</keyword>
<keyword id="KW-0804">Transcription</keyword>
<keyword id="KW-0805">Transcription regulation</keyword>